<name>AC4CH_PASMU</name>
<sequence length="104" mass="12159">MDSNKITFFTRFEQDILAGRKTITIRDKSESSFQPNQILAVYTNETDRFFANIKVLSVTPIHFEALSEAHAQQENMTLPELRQVIKEIYPQEDCFWVIAFELVD</sequence>
<keyword id="KW-0378">Hydrolase</keyword>
<keyword id="KW-1185">Reference proteome</keyword>
<feature type="chain" id="PRO_0000214604" description="N(4)-acetylcytidine amidohydrolase">
    <location>
        <begin position="1"/>
        <end position="104"/>
    </location>
</feature>
<feature type="domain" description="ASCH" evidence="1">
    <location>
        <begin position="7"/>
        <end position="104"/>
    </location>
</feature>
<feature type="active site" description="Proton acceptor" evidence="2">
    <location>
        <position position="21"/>
    </location>
</feature>
<feature type="active site" description="Nucleophile" evidence="2">
    <location>
        <position position="24"/>
    </location>
</feature>
<feature type="active site" description="Proton donor" evidence="2">
    <location>
        <position position="74"/>
    </location>
</feature>
<accession>Q9CL02</accession>
<comment type="function">
    <text evidence="2">Catalyzes the hydrolysis of N(4)-acetylcytidine (ac4C).</text>
</comment>
<comment type="catalytic activity">
    <reaction evidence="2">
        <text>N(4)-acetylcytidine + H2O = cytidine + acetate + H(+)</text>
        <dbReference type="Rhea" id="RHEA:62932"/>
        <dbReference type="ChEBI" id="CHEBI:15377"/>
        <dbReference type="ChEBI" id="CHEBI:15378"/>
        <dbReference type="ChEBI" id="CHEBI:17562"/>
        <dbReference type="ChEBI" id="CHEBI:30089"/>
        <dbReference type="ChEBI" id="CHEBI:70989"/>
        <dbReference type="EC" id="3.5.1.135"/>
    </reaction>
</comment>
<comment type="catalytic activity">
    <reaction evidence="2">
        <text>N(4)-acetyl-2'-deoxycytidine + H2O = 2'-deoxycytidine + acetate + H(+)</text>
        <dbReference type="Rhea" id="RHEA:62936"/>
        <dbReference type="ChEBI" id="CHEBI:15377"/>
        <dbReference type="ChEBI" id="CHEBI:15378"/>
        <dbReference type="ChEBI" id="CHEBI:15698"/>
        <dbReference type="ChEBI" id="CHEBI:30089"/>
        <dbReference type="ChEBI" id="CHEBI:146133"/>
        <dbReference type="EC" id="3.5.1.135"/>
    </reaction>
</comment>
<comment type="catalytic activity">
    <reaction evidence="2">
        <text>N(4)-acetylcytosine + H2O = cytosine + acetate + H(+)</text>
        <dbReference type="Rhea" id="RHEA:62940"/>
        <dbReference type="ChEBI" id="CHEBI:15377"/>
        <dbReference type="ChEBI" id="CHEBI:15378"/>
        <dbReference type="ChEBI" id="CHEBI:16040"/>
        <dbReference type="ChEBI" id="CHEBI:30089"/>
        <dbReference type="ChEBI" id="CHEBI:146134"/>
        <dbReference type="EC" id="3.5.1.135"/>
    </reaction>
</comment>
<comment type="similarity">
    <text evidence="2">Belongs to the N(4)-acetylcytidine amidohydrolase family.</text>
</comment>
<gene>
    <name type="ordered locus">PM1447</name>
</gene>
<protein>
    <recommendedName>
        <fullName evidence="2">N(4)-acetylcytidine amidohydrolase</fullName>
        <shortName evidence="2">ac4C amidohydrolase</shortName>
        <ecNumber evidence="2">3.5.1.135</ecNumber>
    </recommendedName>
</protein>
<evidence type="ECO:0000255" key="1"/>
<evidence type="ECO:0000255" key="2">
    <source>
        <dbReference type="HAMAP-Rule" id="MF_00684"/>
    </source>
</evidence>
<organism>
    <name type="scientific">Pasteurella multocida (strain Pm70)</name>
    <dbReference type="NCBI Taxonomy" id="272843"/>
    <lineage>
        <taxon>Bacteria</taxon>
        <taxon>Pseudomonadati</taxon>
        <taxon>Pseudomonadota</taxon>
        <taxon>Gammaproteobacteria</taxon>
        <taxon>Pasteurellales</taxon>
        <taxon>Pasteurellaceae</taxon>
        <taxon>Pasteurella</taxon>
    </lineage>
</organism>
<proteinExistence type="inferred from homology"/>
<dbReference type="EC" id="3.5.1.135" evidence="2"/>
<dbReference type="EMBL" id="AE004439">
    <property type="protein sequence ID" value="AAK03531.1"/>
    <property type="molecule type" value="Genomic_DNA"/>
</dbReference>
<dbReference type="SMR" id="Q9CL02"/>
<dbReference type="STRING" id="272843.PM1447"/>
<dbReference type="EnsemblBacteria" id="AAK03531">
    <property type="protein sequence ID" value="AAK03531"/>
    <property type="gene ID" value="PM1447"/>
</dbReference>
<dbReference type="KEGG" id="pmu:PM1447"/>
<dbReference type="PATRIC" id="fig|272843.6.peg.1461"/>
<dbReference type="HOGENOM" id="CLU_152586_0_0_6"/>
<dbReference type="OrthoDB" id="8590202at2"/>
<dbReference type="Proteomes" id="UP000000809">
    <property type="component" value="Chromosome"/>
</dbReference>
<dbReference type="GO" id="GO:0005829">
    <property type="term" value="C:cytosol"/>
    <property type="evidence" value="ECO:0007669"/>
    <property type="project" value="TreeGrafter"/>
</dbReference>
<dbReference type="GO" id="GO:0016813">
    <property type="term" value="F:hydrolase activity, acting on carbon-nitrogen (but not peptide) bonds, in linear amidines"/>
    <property type="evidence" value="ECO:0007669"/>
    <property type="project" value="UniProtKB-UniRule"/>
</dbReference>
<dbReference type="GO" id="GO:0106251">
    <property type="term" value="F:N4-acetylcytidine amidohydrolase activity"/>
    <property type="evidence" value="ECO:0007669"/>
    <property type="project" value="RHEA"/>
</dbReference>
<dbReference type="CDD" id="cd06552">
    <property type="entry name" value="ASCH_yqfb_like"/>
    <property type="match status" value="1"/>
</dbReference>
<dbReference type="Gene3D" id="2.30.130.30">
    <property type="entry name" value="Hypothetical protein"/>
    <property type="match status" value="1"/>
</dbReference>
<dbReference type="HAMAP" id="MF_00684">
    <property type="entry name" value="ac4C_amidohydr"/>
    <property type="match status" value="1"/>
</dbReference>
<dbReference type="InterPro" id="IPR008314">
    <property type="entry name" value="AC4CH"/>
</dbReference>
<dbReference type="InterPro" id="IPR007374">
    <property type="entry name" value="ASCH_domain"/>
</dbReference>
<dbReference type="InterPro" id="IPR015947">
    <property type="entry name" value="PUA-like_sf"/>
</dbReference>
<dbReference type="NCBIfam" id="NF003443">
    <property type="entry name" value="PRK04980.1"/>
    <property type="match status" value="1"/>
</dbReference>
<dbReference type="PANTHER" id="PTHR38088">
    <property type="entry name" value="UCP029143 FAMILY PROTEIN"/>
    <property type="match status" value="1"/>
</dbReference>
<dbReference type="PANTHER" id="PTHR38088:SF2">
    <property type="entry name" value="UCP029143 FAMILY PROTEIN"/>
    <property type="match status" value="1"/>
</dbReference>
<dbReference type="Pfam" id="PF04266">
    <property type="entry name" value="ASCH"/>
    <property type="match status" value="1"/>
</dbReference>
<dbReference type="PIRSF" id="PIRSF029143">
    <property type="entry name" value="UCP029143"/>
    <property type="match status" value="1"/>
</dbReference>
<dbReference type="SMART" id="SM01022">
    <property type="entry name" value="ASCH"/>
    <property type="match status" value="1"/>
</dbReference>
<dbReference type="SUPFAM" id="SSF88697">
    <property type="entry name" value="PUA domain-like"/>
    <property type="match status" value="1"/>
</dbReference>
<reference key="1">
    <citation type="journal article" date="2001" name="Proc. Natl. Acad. Sci. U.S.A.">
        <title>Complete genomic sequence of Pasteurella multocida Pm70.</title>
        <authorList>
            <person name="May B.J."/>
            <person name="Zhang Q."/>
            <person name="Li L.L."/>
            <person name="Paustian M.L."/>
            <person name="Whittam T.S."/>
            <person name="Kapur V."/>
        </authorList>
    </citation>
    <scope>NUCLEOTIDE SEQUENCE [LARGE SCALE GENOMIC DNA]</scope>
    <source>
        <strain>Pm70</strain>
    </source>
</reference>